<keyword id="KW-0997">Cell inner membrane</keyword>
<keyword id="KW-1003">Cell membrane</keyword>
<keyword id="KW-0285">Flavoprotein</keyword>
<keyword id="KW-0288">FMN</keyword>
<keyword id="KW-0472">Membrane</keyword>
<keyword id="KW-0520">NAD</keyword>
<keyword id="KW-0560">Oxidoreductase</keyword>
<comment type="function">
    <text evidence="1">Regulatory subunit of a potassium efflux system that confers protection against electrophiles. Required for full activity of KefC. Shows redox enzymatic activity, but this enzymatic activity is not required for activation of KefC.</text>
</comment>
<comment type="catalytic activity">
    <reaction evidence="1">
        <text>a quinone + NADH + H(+) = a quinol + NAD(+)</text>
        <dbReference type="Rhea" id="RHEA:46160"/>
        <dbReference type="ChEBI" id="CHEBI:15378"/>
        <dbReference type="ChEBI" id="CHEBI:24646"/>
        <dbReference type="ChEBI" id="CHEBI:57540"/>
        <dbReference type="ChEBI" id="CHEBI:57945"/>
        <dbReference type="ChEBI" id="CHEBI:132124"/>
        <dbReference type="EC" id="1.6.5.2"/>
    </reaction>
</comment>
<comment type="catalytic activity">
    <reaction evidence="1">
        <text>a quinone + NADPH + H(+) = a quinol + NADP(+)</text>
        <dbReference type="Rhea" id="RHEA:46164"/>
        <dbReference type="ChEBI" id="CHEBI:15378"/>
        <dbReference type="ChEBI" id="CHEBI:24646"/>
        <dbReference type="ChEBI" id="CHEBI:57783"/>
        <dbReference type="ChEBI" id="CHEBI:58349"/>
        <dbReference type="ChEBI" id="CHEBI:132124"/>
        <dbReference type="EC" id="1.6.5.2"/>
    </reaction>
</comment>
<comment type="cofactor">
    <cofactor evidence="1">
        <name>FMN</name>
        <dbReference type="ChEBI" id="CHEBI:58210"/>
    </cofactor>
</comment>
<comment type="subunit">
    <text evidence="1">Homodimer. Interacts with KefC.</text>
</comment>
<comment type="subcellular location">
    <subcellularLocation>
        <location evidence="1">Cell inner membrane</location>
        <topology evidence="1">Peripheral membrane protein</topology>
        <orientation evidence="1">Cytoplasmic side</orientation>
    </subcellularLocation>
</comment>
<comment type="similarity">
    <text evidence="1">Belongs to the NAD(P)H dehydrogenase (quinone) family. KefF subfamily.</text>
</comment>
<dbReference type="EC" id="1.6.5.2" evidence="1"/>
<dbReference type="EMBL" id="AP009240">
    <property type="protein sequence ID" value="BAG75571.1"/>
    <property type="molecule type" value="Genomic_DNA"/>
</dbReference>
<dbReference type="RefSeq" id="WP_000600725.1">
    <property type="nucleotide sequence ID" value="NC_011415.1"/>
</dbReference>
<dbReference type="SMR" id="B6HYZ7"/>
<dbReference type="GeneID" id="89519427"/>
<dbReference type="KEGG" id="ecy:ECSE_0047"/>
<dbReference type="HOGENOM" id="CLU_058643_0_2_6"/>
<dbReference type="Proteomes" id="UP000008199">
    <property type="component" value="Chromosome"/>
</dbReference>
<dbReference type="GO" id="GO:0005886">
    <property type="term" value="C:plasma membrane"/>
    <property type="evidence" value="ECO:0007669"/>
    <property type="project" value="UniProtKB-SubCell"/>
</dbReference>
<dbReference type="GO" id="GO:0009055">
    <property type="term" value="F:electron transfer activity"/>
    <property type="evidence" value="ECO:0007669"/>
    <property type="project" value="TreeGrafter"/>
</dbReference>
<dbReference type="GO" id="GO:0010181">
    <property type="term" value="F:FMN binding"/>
    <property type="evidence" value="ECO:0007669"/>
    <property type="project" value="UniProtKB-UniRule"/>
</dbReference>
<dbReference type="GO" id="GO:0050136">
    <property type="term" value="F:NADH:ubiquinone reductase (non-electrogenic) activity"/>
    <property type="evidence" value="ECO:0007669"/>
    <property type="project" value="RHEA"/>
</dbReference>
<dbReference type="GO" id="GO:0008753">
    <property type="term" value="F:NADPH dehydrogenase (quinone) activity"/>
    <property type="evidence" value="ECO:0007669"/>
    <property type="project" value="RHEA"/>
</dbReference>
<dbReference type="GO" id="GO:1901381">
    <property type="term" value="P:positive regulation of potassium ion transmembrane transport"/>
    <property type="evidence" value="ECO:0007669"/>
    <property type="project" value="UniProtKB-UniRule"/>
</dbReference>
<dbReference type="GO" id="GO:0006813">
    <property type="term" value="P:potassium ion transport"/>
    <property type="evidence" value="ECO:0007669"/>
    <property type="project" value="InterPro"/>
</dbReference>
<dbReference type="FunFam" id="3.40.50.360:FF:000008">
    <property type="entry name" value="Glutathione-regulated potassium-efflux system ancillary protein KefF"/>
    <property type="match status" value="1"/>
</dbReference>
<dbReference type="Gene3D" id="3.40.50.360">
    <property type="match status" value="1"/>
</dbReference>
<dbReference type="HAMAP" id="MF_01414">
    <property type="entry name" value="K_H_efflux_KefF"/>
    <property type="match status" value="1"/>
</dbReference>
<dbReference type="InterPro" id="IPR003680">
    <property type="entry name" value="Flavodoxin_fold"/>
</dbReference>
<dbReference type="InterPro" id="IPR029039">
    <property type="entry name" value="Flavoprotein-like_sf"/>
</dbReference>
<dbReference type="InterPro" id="IPR023948">
    <property type="entry name" value="K_H_efflux_KefF"/>
</dbReference>
<dbReference type="InterPro" id="IPR046980">
    <property type="entry name" value="KefG/KefF"/>
</dbReference>
<dbReference type="NCBIfam" id="NF002044">
    <property type="entry name" value="PRK00871.1"/>
    <property type="match status" value="1"/>
</dbReference>
<dbReference type="PANTHER" id="PTHR47307:SF2">
    <property type="entry name" value="GLUTATHIONE-REGULATED POTASSIUM-EFFLUX SYSTEM ANCILLARY PROTEIN KEFF"/>
    <property type="match status" value="1"/>
</dbReference>
<dbReference type="PANTHER" id="PTHR47307">
    <property type="entry name" value="GLUTATHIONE-REGULATED POTASSIUM-EFFLUX SYSTEM ANCILLARY PROTEIN KEFG"/>
    <property type="match status" value="1"/>
</dbReference>
<dbReference type="Pfam" id="PF02525">
    <property type="entry name" value="Flavodoxin_2"/>
    <property type="match status" value="1"/>
</dbReference>
<dbReference type="SUPFAM" id="SSF52218">
    <property type="entry name" value="Flavoproteins"/>
    <property type="match status" value="1"/>
</dbReference>
<accession>B6HYZ7</accession>
<evidence type="ECO:0000255" key="1">
    <source>
        <dbReference type="HAMAP-Rule" id="MF_01414"/>
    </source>
</evidence>
<protein>
    <recommendedName>
        <fullName evidence="1">Glutathione-regulated potassium-efflux system ancillary protein KefF</fullName>
    </recommendedName>
    <alternativeName>
        <fullName evidence="1">Quinone oxidoreductase KefF</fullName>
        <ecNumber evidence="1">1.6.5.2</ecNumber>
    </alternativeName>
</protein>
<feature type="chain" id="PRO_1000145559" description="Glutathione-regulated potassium-efflux system ancillary protein KefF">
    <location>
        <begin position="1"/>
        <end position="176"/>
    </location>
</feature>
<feature type="binding site" evidence="1">
    <location>
        <position position="8"/>
    </location>
    <ligand>
        <name>FMN</name>
        <dbReference type="ChEBI" id="CHEBI:58210"/>
    </ligand>
</feature>
<feature type="binding site" evidence="1">
    <location>
        <begin position="14"/>
        <end position="17"/>
    </location>
    <ligand>
        <name>FMN</name>
        <dbReference type="ChEBI" id="CHEBI:58210"/>
    </ligand>
</feature>
<feature type="binding site" evidence="1">
    <location>
        <begin position="65"/>
        <end position="68"/>
    </location>
    <ligand>
        <name>FMN</name>
        <dbReference type="ChEBI" id="CHEBI:58210"/>
    </ligand>
</feature>
<feature type="binding site" evidence="1">
    <location>
        <begin position="105"/>
        <end position="108"/>
    </location>
    <ligand>
        <name>FMN</name>
        <dbReference type="ChEBI" id="CHEBI:58210"/>
    </ligand>
</feature>
<sequence>MILIIYAHPYPHHSHANKRMLEQARTLEGVEIRSLYQLYPDFNIDIAAEQEALSRADLIVWQHPMQWYSIPPLLKLWIDKVFSHGWAYGHGGTALHGKHLLWAVTTGGGESHFEIGAHPGFDVLSQPLQATAIYCGLNWLPPFAMHCTFICDDETLEGQARHYKQRLLEWQEAHHG</sequence>
<organism>
    <name type="scientific">Escherichia coli (strain SE11)</name>
    <dbReference type="NCBI Taxonomy" id="409438"/>
    <lineage>
        <taxon>Bacteria</taxon>
        <taxon>Pseudomonadati</taxon>
        <taxon>Pseudomonadota</taxon>
        <taxon>Gammaproteobacteria</taxon>
        <taxon>Enterobacterales</taxon>
        <taxon>Enterobacteriaceae</taxon>
        <taxon>Escherichia</taxon>
    </lineage>
</organism>
<reference key="1">
    <citation type="journal article" date="2008" name="DNA Res.">
        <title>Complete genome sequence and comparative analysis of the wild-type commensal Escherichia coli strain SE11 isolated from a healthy adult.</title>
        <authorList>
            <person name="Oshima K."/>
            <person name="Toh H."/>
            <person name="Ogura Y."/>
            <person name="Sasamoto H."/>
            <person name="Morita H."/>
            <person name="Park S.-H."/>
            <person name="Ooka T."/>
            <person name="Iyoda S."/>
            <person name="Taylor T.D."/>
            <person name="Hayashi T."/>
            <person name="Itoh K."/>
            <person name="Hattori M."/>
        </authorList>
    </citation>
    <scope>NUCLEOTIDE SEQUENCE [LARGE SCALE GENOMIC DNA]</scope>
    <source>
        <strain>SE11</strain>
    </source>
</reference>
<gene>
    <name evidence="1" type="primary">kefF</name>
    <name type="ordered locus">ECSE_0047</name>
</gene>
<proteinExistence type="inferred from homology"/>
<name>KEFF_ECOSE</name>